<organism>
    <name type="scientific">Phytoplasma mali (strain AT)</name>
    <dbReference type="NCBI Taxonomy" id="482235"/>
    <lineage>
        <taxon>Bacteria</taxon>
        <taxon>Bacillati</taxon>
        <taxon>Mycoplasmatota</taxon>
        <taxon>Mollicutes</taxon>
        <taxon>Acholeplasmatales</taxon>
        <taxon>Acholeplasmataceae</taxon>
        <taxon>Candidatus Phytoplasma</taxon>
        <taxon>16SrX (Apple proliferation group)</taxon>
    </lineage>
</organism>
<dbReference type="EMBL" id="CU469464">
    <property type="protein sequence ID" value="CAP18632.1"/>
    <property type="molecule type" value="Genomic_DNA"/>
</dbReference>
<dbReference type="SMR" id="B3R0P8"/>
<dbReference type="STRING" id="37692.ATP_00445"/>
<dbReference type="KEGG" id="pml:ATP_00445"/>
<dbReference type="eggNOG" id="COG0236">
    <property type="taxonomic scope" value="Bacteria"/>
</dbReference>
<dbReference type="HOGENOM" id="CLU_108696_5_2_14"/>
<dbReference type="UniPathway" id="UPA00094"/>
<dbReference type="Proteomes" id="UP000002020">
    <property type="component" value="Chromosome"/>
</dbReference>
<dbReference type="GO" id="GO:0005829">
    <property type="term" value="C:cytosol"/>
    <property type="evidence" value="ECO:0007669"/>
    <property type="project" value="TreeGrafter"/>
</dbReference>
<dbReference type="GO" id="GO:0016020">
    <property type="term" value="C:membrane"/>
    <property type="evidence" value="ECO:0007669"/>
    <property type="project" value="GOC"/>
</dbReference>
<dbReference type="GO" id="GO:0000035">
    <property type="term" value="F:acyl binding"/>
    <property type="evidence" value="ECO:0007669"/>
    <property type="project" value="TreeGrafter"/>
</dbReference>
<dbReference type="GO" id="GO:0000036">
    <property type="term" value="F:acyl carrier activity"/>
    <property type="evidence" value="ECO:0007669"/>
    <property type="project" value="UniProtKB-UniRule"/>
</dbReference>
<dbReference type="GO" id="GO:0009245">
    <property type="term" value="P:lipid A biosynthetic process"/>
    <property type="evidence" value="ECO:0007669"/>
    <property type="project" value="TreeGrafter"/>
</dbReference>
<dbReference type="Gene3D" id="1.10.1200.10">
    <property type="entry name" value="ACP-like"/>
    <property type="match status" value="1"/>
</dbReference>
<dbReference type="HAMAP" id="MF_01217">
    <property type="entry name" value="Acyl_carrier"/>
    <property type="match status" value="1"/>
</dbReference>
<dbReference type="InterPro" id="IPR003231">
    <property type="entry name" value="ACP"/>
</dbReference>
<dbReference type="InterPro" id="IPR036736">
    <property type="entry name" value="ACP-like_sf"/>
</dbReference>
<dbReference type="InterPro" id="IPR009081">
    <property type="entry name" value="PP-bd_ACP"/>
</dbReference>
<dbReference type="NCBIfam" id="TIGR00517">
    <property type="entry name" value="acyl_carrier"/>
    <property type="match status" value="1"/>
</dbReference>
<dbReference type="NCBIfam" id="NF002148">
    <property type="entry name" value="PRK00982.1-2"/>
    <property type="match status" value="1"/>
</dbReference>
<dbReference type="NCBIfam" id="NF002150">
    <property type="entry name" value="PRK00982.1-4"/>
    <property type="match status" value="1"/>
</dbReference>
<dbReference type="PANTHER" id="PTHR20863">
    <property type="entry name" value="ACYL CARRIER PROTEIN"/>
    <property type="match status" value="1"/>
</dbReference>
<dbReference type="PANTHER" id="PTHR20863:SF76">
    <property type="entry name" value="CARRIER DOMAIN-CONTAINING PROTEIN"/>
    <property type="match status" value="1"/>
</dbReference>
<dbReference type="Pfam" id="PF00550">
    <property type="entry name" value="PP-binding"/>
    <property type="match status" value="1"/>
</dbReference>
<dbReference type="SUPFAM" id="SSF47336">
    <property type="entry name" value="ACP-like"/>
    <property type="match status" value="1"/>
</dbReference>
<dbReference type="PROSITE" id="PS50075">
    <property type="entry name" value="CARRIER"/>
    <property type="match status" value="1"/>
</dbReference>
<evidence type="ECO:0000255" key="1">
    <source>
        <dbReference type="HAMAP-Rule" id="MF_01217"/>
    </source>
</evidence>
<evidence type="ECO:0000255" key="2">
    <source>
        <dbReference type="PROSITE-ProRule" id="PRU00258"/>
    </source>
</evidence>
<reference key="1">
    <citation type="journal article" date="2008" name="BMC Genomics">
        <title>The linear chromosome of the plant-pathogenic mycoplasma 'Candidatus Phytoplasma mali'.</title>
        <authorList>
            <person name="Kube M."/>
            <person name="Schneider B."/>
            <person name="Kuhl H."/>
            <person name="Dandekar T."/>
            <person name="Heitmann K."/>
            <person name="Migdoll A.M."/>
            <person name="Reinhardt R."/>
            <person name="Seemueller E."/>
        </authorList>
    </citation>
    <scope>NUCLEOTIDE SEQUENCE [LARGE SCALE GENOMIC DNA]</scope>
    <source>
        <strain>AT</strain>
    </source>
</reference>
<protein>
    <recommendedName>
        <fullName evidence="1">Acyl carrier protein</fullName>
        <shortName evidence="1">ACP</shortName>
    </recommendedName>
</protein>
<sequence length="84" mass="9952">MIFQKIQEFIAEQLSIDKNNIKLESDLKEDLGIDSIDAVGLIIKIEEFFKLEVSDETLQKFKNVKDILEYIQQHVDNYDYLEKK</sequence>
<comment type="function">
    <text evidence="1">Carrier of the growing fatty acid chain in fatty acid biosynthesis.</text>
</comment>
<comment type="pathway">
    <text evidence="1">Lipid metabolism; fatty acid biosynthesis.</text>
</comment>
<comment type="subcellular location">
    <subcellularLocation>
        <location evidence="1">Cytoplasm</location>
    </subcellularLocation>
</comment>
<comment type="PTM">
    <text evidence="1">4'-phosphopantetheine is transferred from CoA to a specific serine of apo-ACP by AcpS. This modification is essential for activity because fatty acids are bound in thioester linkage to the sulfhydryl of the prosthetic group.</text>
</comment>
<comment type="similarity">
    <text evidence="1">Belongs to the acyl carrier protein (ACP) family.</text>
</comment>
<name>ACP_PHYMT</name>
<gene>
    <name evidence="1" type="primary">acpP</name>
    <name type="ordered locus">ATP_00445</name>
</gene>
<keyword id="KW-0963">Cytoplasm</keyword>
<keyword id="KW-0275">Fatty acid biosynthesis</keyword>
<keyword id="KW-0276">Fatty acid metabolism</keyword>
<keyword id="KW-0444">Lipid biosynthesis</keyword>
<keyword id="KW-0443">Lipid metabolism</keyword>
<keyword id="KW-0596">Phosphopantetheine</keyword>
<keyword id="KW-0597">Phosphoprotein</keyword>
<keyword id="KW-1185">Reference proteome</keyword>
<accession>B3R0P8</accession>
<feature type="chain" id="PRO_1000164798" description="Acyl carrier protein">
    <location>
        <begin position="1"/>
        <end position="84"/>
    </location>
</feature>
<feature type="domain" description="Carrier" evidence="2">
    <location>
        <begin position="1"/>
        <end position="75"/>
    </location>
</feature>
<feature type="modified residue" description="O-(pantetheine 4'-phosphoryl)serine" evidence="2">
    <location>
        <position position="35"/>
    </location>
</feature>
<proteinExistence type="inferred from homology"/>